<comment type="function">
    <text evidence="1">Catalyzes the decarboxylation of orotidine 5'-monophosphate (OMP) to uridine 5'-monophosphate (UMP).</text>
</comment>
<comment type="catalytic activity">
    <reaction evidence="1">
        <text>orotidine 5'-phosphate + H(+) = UMP + CO2</text>
        <dbReference type="Rhea" id="RHEA:11596"/>
        <dbReference type="ChEBI" id="CHEBI:15378"/>
        <dbReference type="ChEBI" id="CHEBI:16526"/>
        <dbReference type="ChEBI" id="CHEBI:57538"/>
        <dbReference type="ChEBI" id="CHEBI:57865"/>
        <dbReference type="EC" id="4.1.1.23"/>
    </reaction>
</comment>
<comment type="pathway">
    <text evidence="1">Pyrimidine metabolism; UMP biosynthesis via de novo pathway; UMP from orotate: step 2/2.</text>
</comment>
<comment type="subunit">
    <text evidence="1">Homodimer.</text>
</comment>
<comment type="similarity">
    <text evidence="1">Belongs to the OMP decarboxylase family. Type 1 subfamily.</text>
</comment>
<accession>Q7VLR5</accession>
<evidence type="ECO:0000255" key="1">
    <source>
        <dbReference type="HAMAP-Rule" id="MF_01200"/>
    </source>
</evidence>
<dbReference type="EC" id="4.1.1.23" evidence="1"/>
<dbReference type="EMBL" id="AE017143">
    <property type="protein sequence ID" value="AAP96170.1"/>
    <property type="molecule type" value="Genomic_DNA"/>
</dbReference>
<dbReference type="RefSeq" id="WP_010945219.1">
    <property type="nucleotide sequence ID" value="NC_002940.2"/>
</dbReference>
<dbReference type="SMR" id="Q7VLR5"/>
<dbReference type="STRING" id="233412.HD_1356"/>
<dbReference type="KEGG" id="hdu:HD_1356"/>
<dbReference type="eggNOG" id="COG0284">
    <property type="taxonomic scope" value="Bacteria"/>
</dbReference>
<dbReference type="HOGENOM" id="CLU_067069_0_0_6"/>
<dbReference type="OrthoDB" id="9806203at2"/>
<dbReference type="UniPathway" id="UPA00070">
    <property type="reaction ID" value="UER00120"/>
</dbReference>
<dbReference type="Proteomes" id="UP000001022">
    <property type="component" value="Chromosome"/>
</dbReference>
<dbReference type="GO" id="GO:0005829">
    <property type="term" value="C:cytosol"/>
    <property type="evidence" value="ECO:0007669"/>
    <property type="project" value="TreeGrafter"/>
</dbReference>
<dbReference type="GO" id="GO:0004590">
    <property type="term" value="F:orotidine-5'-phosphate decarboxylase activity"/>
    <property type="evidence" value="ECO:0007669"/>
    <property type="project" value="UniProtKB-UniRule"/>
</dbReference>
<dbReference type="GO" id="GO:0006207">
    <property type="term" value="P:'de novo' pyrimidine nucleobase biosynthetic process"/>
    <property type="evidence" value="ECO:0007669"/>
    <property type="project" value="InterPro"/>
</dbReference>
<dbReference type="GO" id="GO:0044205">
    <property type="term" value="P:'de novo' UMP biosynthetic process"/>
    <property type="evidence" value="ECO:0007669"/>
    <property type="project" value="UniProtKB-UniRule"/>
</dbReference>
<dbReference type="CDD" id="cd04725">
    <property type="entry name" value="OMP_decarboxylase_like"/>
    <property type="match status" value="1"/>
</dbReference>
<dbReference type="FunFam" id="3.20.20.70:FF:000015">
    <property type="entry name" value="Orotidine 5'-phosphate decarboxylase"/>
    <property type="match status" value="1"/>
</dbReference>
<dbReference type="Gene3D" id="3.20.20.70">
    <property type="entry name" value="Aldolase class I"/>
    <property type="match status" value="1"/>
</dbReference>
<dbReference type="HAMAP" id="MF_01200_B">
    <property type="entry name" value="OMPdecase_type1_B"/>
    <property type="match status" value="1"/>
</dbReference>
<dbReference type="InterPro" id="IPR013785">
    <property type="entry name" value="Aldolase_TIM"/>
</dbReference>
<dbReference type="InterPro" id="IPR014732">
    <property type="entry name" value="OMPdecase"/>
</dbReference>
<dbReference type="InterPro" id="IPR018089">
    <property type="entry name" value="OMPdecase_AS"/>
</dbReference>
<dbReference type="InterPro" id="IPR047596">
    <property type="entry name" value="OMPdecase_bac"/>
</dbReference>
<dbReference type="InterPro" id="IPR001754">
    <property type="entry name" value="OMPdeCOase_dom"/>
</dbReference>
<dbReference type="InterPro" id="IPR011060">
    <property type="entry name" value="RibuloseP-bd_barrel"/>
</dbReference>
<dbReference type="NCBIfam" id="NF001273">
    <property type="entry name" value="PRK00230.1"/>
    <property type="match status" value="1"/>
</dbReference>
<dbReference type="NCBIfam" id="TIGR01740">
    <property type="entry name" value="pyrF"/>
    <property type="match status" value="1"/>
</dbReference>
<dbReference type="PANTHER" id="PTHR32119">
    <property type="entry name" value="OROTIDINE 5'-PHOSPHATE DECARBOXYLASE"/>
    <property type="match status" value="1"/>
</dbReference>
<dbReference type="PANTHER" id="PTHR32119:SF2">
    <property type="entry name" value="OROTIDINE 5'-PHOSPHATE DECARBOXYLASE"/>
    <property type="match status" value="1"/>
</dbReference>
<dbReference type="Pfam" id="PF00215">
    <property type="entry name" value="OMPdecase"/>
    <property type="match status" value="1"/>
</dbReference>
<dbReference type="SMART" id="SM00934">
    <property type="entry name" value="OMPdecase"/>
    <property type="match status" value="1"/>
</dbReference>
<dbReference type="SUPFAM" id="SSF51366">
    <property type="entry name" value="Ribulose-phoshate binding barrel"/>
    <property type="match status" value="1"/>
</dbReference>
<dbReference type="PROSITE" id="PS00156">
    <property type="entry name" value="OMPDECASE"/>
    <property type="match status" value="1"/>
</dbReference>
<name>PYRF_HAEDU</name>
<sequence length="230" mass="25276">MDNKIIVALDYETENEALNFIDQVDPSLCRLKVGKEMFTTLGAHFVKQLHDRKFDVFLDLKYHDIPNTVARAVRSAADLGVWMVDLHASGGLTMMEEAKKILEPYGKDAPLLIAVTVLTSMEDLDLLQIGINASPMEQVIRLSHLAKRAGLDGVVCSPQEVEVLRTHCGDDFKLVTPGIRPAGSDFGDQRRVMTPKQAIQTGADFLVIGRPITQAQEPLSILKAINASIA</sequence>
<proteinExistence type="inferred from homology"/>
<keyword id="KW-0210">Decarboxylase</keyword>
<keyword id="KW-0456">Lyase</keyword>
<keyword id="KW-0665">Pyrimidine biosynthesis</keyword>
<keyword id="KW-1185">Reference proteome</keyword>
<feature type="chain" id="PRO_0000134545" description="Orotidine 5'-phosphate decarboxylase">
    <location>
        <begin position="1"/>
        <end position="230"/>
    </location>
</feature>
<feature type="active site" description="Proton donor" evidence="1">
    <location>
        <position position="61"/>
    </location>
</feature>
<feature type="binding site" evidence="1">
    <location>
        <position position="10"/>
    </location>
    <ligand>
        <name>substrate</name>
    </ligand>
</feature>
<feature type="binding site" evidence="1">
    <location>
        <position position="32"/>
    </location>
    <ligand>
        <name>substrate</name>
    </ligand>
</feature>
<feature type="binding site" evidence="1">
    <location>
        <begin position="59"/>
        <end position="68"/>
    </location>
    <ligand>
        <name>substrate</name>
    </ligand>
</feature>
<feature type="binding site" evidence="1">
    <location>
        <position position="119"/>
    </location>
    <ligand>
        <name>substrate</name>
    </ligand>
</feature>
<feature type="binding site" evidence="1">
    <location>
        <position position="180"/>
    </location>
    <ligand>
        <name>substrate</name>
    </ligand>
</feature>
<feature type="binding site" evidence="1">
    <location>
        <position position="189"/>
    </location>
    <ligand>
        <name>substrate</name>
    </ligand>
</feature>
<feature type="binding site" evidence="1">
    <location>
        <position position="209"/>
    </location>
    <ligand>
        <name>substrate</name>
    </ligand>
</feature>
<feature type="binding site" evidence="1">
    <location>
        <position position="210"/>
    </location>
    <ligand>
        <name>substrate</name>
    </ligand>
</feature>
<protein>
    <recommendedName>
        <fullName evidence="1">Orotidine 5'-phosphate decarboxylase</fullName>
        <ecNumber evidence="1">4.1.1.23</ecNumber>
    </recommendedName>
    <alternativeName>
        <fullName evidence="1">OMP decarboxylase</fullName>
        <shortName evidence="1">OMPDCase</shortName>
        <shortName evidence="1">OMPdecase</shortName>
    </alternativeName>
</protein>
<organism>
    <name type="scientific">Haemophilus ducreyi (strain 35000HP / ATCC 700724)</name>
    <dbReference type="NCBI Taxonomy" id="233412"/>
    <lineage>
        <taxon>Bacteria</taxon>
        <taxon>Pseudomonadati</taxon>
        <taxon>Pseudomonadota</taxon>
        <taxon>Gammaproteobacteria</taxon>
        <taxon>Pasteurellales</taxon>
        <taxon>Pasteurellaceae</taxon>
        <taxon>Haemophilus</taxon>
    </lineage>
</organism>
<gene>
    <name evidence="1" type="primary">pyrF</name>
    <name type="ordered locus">HD_1356</name>
</gene>
<reference key="1">
    <citation type="submission" date="2003-06" db="EMBL/GenBank/DDBJ databases">
        <title>The complete genome sequence of Haemophilus ducreyi.</title>
        <authorList>
            <person name="Munson R.S. Jr."/>
            <person name="Ray W.C."/>
            <person name="Mahairas G."/>
            <person name="Sabo P."/>
            <person name="Mungur R."/>
            <person name="Johnson L."/>
            <person name="Nguyen D."/>
            <person name="Wang J."/>
            <person name="Forst C."/>
            <person name="Hood L."/>
        </authorList>
    </citation>
    <scope>NUCLEOTIDE SEQUENCE [LARGE SCALE GENOMIC DNA]</scope>
    <source>
        <strain>35000HP / ATCC 700724</strain>
    </source>
</reference>